<dbReference type="EC" id="2.7.1.100" evidence="1 2"/>
<dbReference type="EMBL" id="CU928161">
    <property type="protein sequence ID" value="CAR06047.1"/>
    <property type="molecule type" value="Genomic_DNA"/>
</dbReference>
<dbReference type="RefSeq" id="WP_000132327.1">
    <property type="nucleotide sequence ID" value="NC_011742.1"/>
</dbReference>
<dbReference type="SMR" id="B7MMH5"/>
<dbReference type="KEGG" id="ecz:ECS88_4901"/>
<dbReference type="HOGENOM" id="CLU_033681_0_0_6"/>
<dbReference type="UniPathway" id="UPA00904">
    <property type="reaction ID" value="UER00872"/>
</dbReference>
<dbReference type="Proteomes" id="UP000000747">
    <property type="component" value="Chromosome"/>
</dbReference>
<dbReference type="GO" id="GO:0005524">
    <property type="term" value="F:ATP binding"/>
    <property type="evidence" value="ECO:0007669"/>
    <property type="project" value="UniProtKB-UniRule"/>
</dbReference>
<dbReference type="GO" id="GO:0046522">
    <property type="term" value="F:S-methyl-5-thioribose kinase activity"/>
    <property type="evidence" value="ECO:0007669"/>
    <property type="project" value="UniProtKB-UniRule"/>
</dbReference>
<dbReference type="GO" id="GO:0019509">
    <property type="term" value="P:L-methionine salvage from methylthioadenosine"/>
    <property type="evidence" value="ECO:0007669"/>
    <property type="project" value="UniProtKB-UniRule"/>
</dbReference>
<dbReference type="Gene3D" id="3.90.1200.10">
    <property type="match status" value="1"/>
</dbReference>
<dbReference type="Gene3D" id="3.30.200.20">
    <property type="entry name" value="Phosphorylase Kinase, domain 1"/>
    <property type="match status" value="1"/>
</dbReference>
<dbReference type="HAMAP" id="MF_01683">
    <property type="entry name" value="Salvage_MtnK"/>
    <property type="match status" value="1"/>
</dbReference>
<dbReference type="InterPro" id="IPR002575">
    <property type="entry name" value="Aminoglycoside_PTrfase"/>
</dbReference>
<dbReference type="InterPro" id="IPR011009">
    <property type="entry name" value="Kinase-like_dom_sf"/>
</dbReference>
<dbReference type="InterPro" id="IPR009212">
    <property type="entry name" value="Methylthioribose_kinase"/>
</dbReference>
<dbReference type="NCBIfam" id="TIGR01767">
    <property type="entry name" value="MTRK"/>
    <property type="match status" value="1"/>
</dbReference>
<dbReference type="PANTHER" id="PTHR34273">
    <property type="entry name" value="METHYLTHIORIBOSE KINASE"/>
    <property type="match status" value="1"/>
</dbReference>
<dbReference type="PANTHER" id="PTHR34273:SF2">
    <property type="entry name" value="METHYLTHIORIBOSE KINASE"/>
    <property type="match status" value="1"/>
</dbReference>
<dbReference type="Pfam" id="PF01636">
    <property type="entry name" value="APH"/>
    <property type="match status" value="1"/>
</dbReference>
<dbReference type="PIRSF" id="PIRSF031134">
    <property type="entry name" value="MTRK"/>
    <property type="match status" value="1"/>
</dbReference>
<dbReference type="SUPFAM" id="SSF56112">
    <property type="entry name" value="Protein kinase-like (PK-like)"/>
    <property type="match status" value="1"/>
</dbReference>
<name>MTNK_ECO45</name>
<gene>
    <name evidence="1 3" type="primary">mtnK</name>
    <name evidence="4" type="ordered locus">ECS88_4901</name>
</gene>
<organism>
    <name type="scientific">Escherichia coli O45:K1 (strain S88 / ExPEC)</name>
    <dbReference type="NCBI Taxonomy" id="585035"/>
    <lineage>
        <taxon>Bacteria</taxon>
        <taxon>Pseudomonadati</taxon>
        <taxon>Pseudomonadota</taxon>
        <taxon>Gammaproteobacteria</taxon>
        <taxon>Enterobacterales</taxon>
        <taxon>Enterobacteriaceae</taxon>
        <taxon>Escherichia</taxon>
    </lineage>
</organism>
<comment type="function">
    <text evidence="2">Catalyzes the phosphorylation of methylthioribose into methylthioribose-1-phosphate (PubMed:31950558). Also catalyzes the phosphorylation of 5-deoxyribose to 5-deoxyribose-1-phosphate (PubMed:31950558). Part of a bifunctional DHAP-shunt salvage pathway for SAM by-products (PubMed:31950558).</text>
</comment>
<comment type="catalytic activity">
    <reaction evidence="1 2">
        <text>5-(methylsulfanyl)-D-ribose + ATP = 5-(methylsulfanyl)-alpha-D-ribose 1-phosphate + ADP + H(+)</text>
        <dbReference type="Rhea" id="RHEA:22312"/>
        <dbReference type="ChEBI" id="CHEBI:15378"/>
        <dbReference type="ChEBI" id="CHEBI:30616"/>
        <dbReference type="ChEBI" id="CHEBI:58533"/>
        <dbReference type="ChEBI" id="CHEBI:78440"/>
        <dbReference type="ChEBI" id="CHEBI:456216"/>
        <dbReference type="EC" id="2.7.1.100"/>
    </reaction>
    <physiologicalReaction direction="left-to-right" evidence="2">
        <dbReference type="Rhea" id="RHEA:22313"/>
    </physiologicalReaction>
</comment>
<comment type="catalytic activity">
    <reaction evidence="2">
        <text>5-deoxy-D-ribose + ATP = 5-deoxy-alpha-D-ribose 1-phosphate + ADP + H(+)</text>
        <dbReference type="Rhea" id="RHEA:61288"/>
        <dbReference type="ChEBI" id="CHEBI:15378"/>
        <dbReference type="ChEBI" id="CHEBI:30616"/>
        <dbReference type="ChEBI" id="CHEBI:58749"/>
        <dbReference type="ChEBI" id="CHEBI:149540"/>
        <dbReference type="ChEBI" id="CHEBI:456216"/>
    </reaction>
    <physiologicalReaction direction="left-to-right" evidence="2">
        <dbReference type="Rhea" id="RHEA:61289"/>
    </physiologicalReaction>
</comment>
<comment type="biophysicochemical properties">
    <kinetics>
        <KM evidence="2">186 uM for 5-methythioribose</KM>
        <KM evidence="2">25 uM for 5-deoxyribose</KM>
        <KM evidence="2">2265 uM for S-ribosyl-L-homocysteine</KM>
        <KM evidence="2">18181 uM for ribose</KM>
        <KM evidence="2">83 uM for ATP (in the presence of 5-deoxyribose)</KM>
        <text evidence="2">kcat is 10.6 sec(-1) with 5-methythioribose as substrate. kcat is 16.1 sec(-1) with 5-deoxyribose as substrate. kcat is 5.4 sec(-1) with S-ribosyl-L-homocysteine as substrate. kcat is 11.6 sec(-1) with ribose as substrate.</text>
    </kinetics>
</comment>
<comment type="pathway">
    <text evidence="1 2">Amino-acid biosynthesis; L-methionine biosynthesis via salvage pathway; S-methyl-5-thio-alpha-D-ribose 1-phosphate from S-methyl-5'-thioadenosine (hydrolase route): step 2/2.</text>
</comment>
<comment type="subunit">
    <text evidence="1">Homodimer.</text>
</comment>
<comment type="disruption phenotype">
    <text evidence="2">Inactivation of the gene precludes growth of the strain with 5-deoxyribose.</text>
</comment>
<comment type="similarity">
    <text evidence="1">Belongs to the methylthioribose kinase family.</text>
</comment>
<reference key="1">
    <citation type="journal article" date="2009" name="PLoS Genet.">
        <title>Organised genome dynamics in the Escherichia coli species results in highly diverse adaptive paths.</title>
        <authorList>
            <person name="Touchon M."/>
            <person name="Hoede C."/>
            <person name="Tenaillon O."/>
            <person name="Barbe V."/>
            <person name="Baeriswyl S."/>
            <person name="Bidet P."/>
            <person name="Bingen E."/>
            <person name="Bonacorsi S."/>
            <person name="Bouchier C."/>
            <person name="Bouvet O."/>
            <person name="Calteau A."/>
            <person name="Chiapello H."/>
            <person name="Clermont O."/>
            <person name="Cruveiller S."/>
            <person name="Danchin A."/>
            <person name="Diard M."/>
            <person name="Dossat C."/>
            <person name="Karoui M.E."/>
            <person name="Frapy E."/>
            <person name="Garry L."/>
            <person name="Ghigo J.M."/>
            <person name="Gilles A.M."/>
            <person name="Johnson J."/>
            <person name="Le Bouguenec C."/>
            <person name="Lescat M."/>
            <person name="Mangenot S."/>
            <person name="Martinez-Jehanne V."/>
            <person name="Matic I."/>
            <person name="Nassif X."/>
            <person name="Oztas S."/>
            <person name="Petit M.A."/>
            <person name="Pichon C."/>
            <person name="Rouy Z."/>
            <person name="Ruf C.S."/>
            <person name="Schneider D."/>
            <person name="Tourret J."/>
            <person name="Vacherie B."/>
            <person name="Vallenet D."/>
            <person name="Medigue C."/>
            <person name="Rocha E.P.C."/>
            <person name="Denamur E."/>
        </authorList>
    </citation>
    <scope>NUCLEOTIDE SEQUENCE [LARGE SCALE GENOMIC DNA]</scope>
    <source>
        <strain>S88 / ExPEC</strain>
    </source>
</reference>
<reference key="2">
    <citation type="journal article" date="2020" name="Mol. Microbiol.">
        <title>A bifunctional salvage pathway for two distinct S-adenosylmethionine by-products that is widespread in bacteria, including pathogenic Escherichia coli.</title>
        <authorList>
            <person name="North J.A."/>
            <person name="Wildenthal J.A."/>
            <person name="Erb T.J."/>
            <person name="Evans B.S."/>
            <person name="Byerly K.M."/>
            <person name="Gerlt J.A."/>
            <person name="Tabita F.R."/>
        </authorList>
    </citation>
    <scope>FUNCTION</scope>
    <scope>CATALYTIC ACTIVITY</scope>
    <scope>BIOPHYSICOCHEMICAL PROPERTIES</scope>
    <scope>PATHWAY</scope>
    <scope>DISRUPTION PHENOTYPE</scope>
    <source>
        <strain>ATCC 25922 / DSM 1103 / NCIB 12210 / ExPEC</strain>
    </source>
</reference>
<protein>
    <recommendedName>
        <fullName evidence="1">Methylthioribose kinase</fullName>
        <shortName evidence="1">MTR kinase</shortName>
        <ecNumber evidence="1 2">2.7.1.100</ecNumber>
    </recommendedName>
</protein>
<feature type="chain" id="PRO_0000450353" description="Methylthioribose kinase">
    <location>
        <begin position="1"/>
        <end position="419"/>
    </location>
</feature>
<feature type="binding site" evidence="1">
    <location>
        <position position="49"/>
    </location>
    <ligand>
        <name>ATP</name>
        <dbReference type="ChEBI" id="CHEBI:30616"/>
    </ligand>
</feature>
<feature type="binding site" evidence="1">
    <location>
        <position position="64"/>
    </location>
    <ligand>
        <name>ATP</name>
        <dbReference type="ChEBI" id="CHEBI:30616"/>
    </ligand>
</feature>
<feature type="binding site" evidence="1">
    <location>
        <position position="239"/>
    </location>
    <ligand>
        <name>substrate</name>
    </ligand>
</feature>
<feature type="binding site" evidence="1">
    <location>
        <begin position="256"/>
        <end position="258"/>
    </location>
    <ligand>
        <name>ATP</name>
        <dbReference type="ChEBI" id="CHEBI:30616"/>
    </ligand>
</feature>
<feature type="binding site" evidence="1">
    <location>
        <position position="365"/>
    </location>
    <ligand>
        <name>substrate</name>
    </ligand>
</feature>
<proteinExistence type="evidence at protein level"/>
<evidence type="ECO:0000255" key="1">
    <source>
        <dbReference type="HAMAP-Rule" id="MF_01683"/>
    </source>
</evidence>
<evidence type="ECO:0000269" key="2">
    <source>
    </source>
</evidence>
<evidence type="ECO:0000303" key="3">
    <source>
    </source>
</evidence>
<evidence type="ECO:0000312" key="4">
    <source>
        <dbReference type="EMBL" id="CAR06047.1"/>
    </source>
</evidence>
<keyword id="KW-0028">Amino-acid biosynthesis</keyword>
<keyword id="KW-0067">ATP-binding</keyword>
<keyword id="KW-0418">Kinase</keyword>
<keyword id="KW-0486">Methionine biosynthesis</keyword>
<keyword id="KW-0547">Nucleotide-binding</keyword>
<keyword id="KW-1185">Reference proteome</keyword>
<keyword id="KW-0808">Transferase</keyword>
<sequence>MTDSIPSGYKPLTCDTLPGYLSSRLTPSCEPGGLPEEWKVSEVGDGNLNMVFIVEGTHKTIIVKQALPWLRAGGEGWPLSLSRAGFEYNVLCQEAKYAGHTLIPQVYFYDPEMALFAMEYLTPHVILRKELINGKKFPKLAEDIGRFLAQTLFNTSDIGMSAEQKKALTAEFALNHELCKITEDLIFTEPYYNAERNNWTSPELDDAVHKAWADVEMIQVAMRYKYKFMTEAQALLHGDLHSGSIMVTDTDTKVIDPEFGFMGPMAFDIGNYIGNLLLAYFSRPGWDANEQRRADYQEWLLQQIVQTWSVFTREFRQLWDNKTQGDAWSTEMYQQNRAALEDAQDQFFATLLEDSLVNAGMEMNRRIIGFAGVAELKQIENTELRAGCERRALTMARDLIVNARQFKNMDSVIQSAKVK</sequence>
<accession>B7MMH5</accession>